<protein>
    <recommendedName>
        <fullName evidence="1">Translational regulator CsrA</fullName>
    </recommendedName>
</protein>
<sequence>MLVLSRKVNESIQIGPDIEIKVIAIEGEQVKLGIEAPQHVDIHRKEIYLSILEENNRAVSFNTDLLLNLSSQKK</sequence>
<name>CSRA_BACVZ</name>
<comment type="function">
    <text evidence="1">A translational regulator that binds mRNA to regulate translation initiation and/or mRNA stability. Usually binds in the 5'-UTR at or near the Shine-Dalgarno sequence preventing ribosome-binding, thus repressing translation. Its main target seems to be the major flagellin gene, while its function is anatagonized by FliW.</text>
</comment>
<comment type="subunit">
    <text evidence="1">Homodimer; the beta-strands of each monomer intercalate to form a hydrophobic core, while the alpha-helices form wings that extend away from the core.</text>
</comment>
<comment type="subcellular location">
    <subcellularLocation>
        <location evidence="1">Cytoplasm</location>
    </subcellularLocation>
</comment>
<comment type="similarity">
    <text evidence="1">Belongs to the CsrA/RsmA family.</text>
</comment>
<proteinExistence type="inferred from homology"/>
<accession>A7Z9A6</accession>
<feature type="chain" id="PRO_1000023360" description="Translational regulator CsrA">
    <location>
        <begin position="1"/>
        <end position="74"/>
    </location>
</feature>
<gene>
    <name evidence="1" type="primary">csrA</name>
    <name type="ordered locus">RBAM_032520</name>
</gene>
<reference key="1">
    <citation type="journal article" date="2007" name="Nat. Biotechnol.">
        <title>Comparative analysis of the complete genome sequence of the plant growth-promoting bacterium Bacillus amyloliquefaciens FZB42.</title>
        <authorList>
            <person name="Chen X.H."/>
            <person name="Koumoutsi A."/>
            <person name="Scholz R."/>
            <person name="Eisenreich A."/>
            <person name="Schneider K."/>
            <person name="Heinemeyer I."/>
            <person name="Morgenstern B."/>
            <person name="Voss B."/>
            <person name="Hess W.R."/>
            <person name="Reva O."/>
            <person name="Junge H."/>
            <person name="Voigt B."/>
            <person name="Jungblut P.R."/>
            <person name="Vater J."/>
            <person name="Suessmuth R."/>
            <person name="Liesegang H."/>
            <person name="Strittmatter A."/>
            <person name="Gottschalk G."/>
            <person name="Borriss R."/>
        </authorList>
    </citation>
    <scope>NUCLEOTIDE SEQUENCE [LARGE SCALE GENOMIC DNA]</scope>
    <source>
        <strain>DSM 23117 / BGSC 10A6 / LMG 26770 / FZB42</strain>
    </source>
</reference>
<dbReference type="EMBL" id="CP000560">
    <property type="protein sequence ID" value="ABS75582.1"/>
    <property type="molecule type" value="Genomic_DNA"/>
</dbReference>
<dbReference type="RefSeq" id="WP_003151402.1">
    <property type="nucleotide sequence ID" value="NC_009725.2"/>
</dbReference>
<dbReference type="SMR" id="A7Z9A6"/>
<dbReference type="GeneID" id="93082397"/>
<dbReference type="KEGG" id="bay:RBAM_032520"/>
<dbReference type="HOGENOM" id="CLU_164837_0_1_9"/>
<dbReference type="Proteomes" id="UP000001120">
    <property type="component" value="Chromosome"/>
</dbReference>
<dbReference type="GO" id="GO:0005829">
    <property type="term" value="C:cytosol"/>
    <property type="evidence" value="ECO:0007669"/>
    <property type="project" value="TreeGrafter"/>
</dbReference>
<dbReference type="GO" id="GO:0048027">
    <property type="term" value="F:mRNA 5'-UTR binding"/>
    <property type="evidence" value="ECO:0007669"/>
    <property type="project" value="UniProtKB-UniRule"/>
</dbReference>
<dbReference type="GO" id="GO:0044781">
    <property type="term" value="P:bacterial-type flagellum organization"/>
    <property type="evidence" value="ECO:0007669"/>
    <property type="project" value="UniProtKB-KW"/>
</dbReference>
<dbReference type="GO" id="GO:0006402">
    <property type="term" value="P:mRNA catabolic process"/>
    <property type="evidence" value="ECO:0007669"/>
    <property type="project" value="InterPro"/>
</dbReference>
<dbReference type="GO" id="GO:0045947">
    <property type="term" value="P:negative regulation of translational initiation"/>
    <property type="evidence" value="ECO:0007669"/>
    <property type="project" value="UniProtKB-UniRule"/>
</dbReference>
<dbReference type="GO" id="GO:1902208">
    <property type="term" value="P:regulation of bacterial-type flagellum assembly"/>
    <property type="evidence" value="ECO:0007669"/>
    <property type="project" value="UniProtKB-UniRule"/>
</dbReference>
<dbReference type="GO" id="GO:0006109">
    <property type="term" value="P:regulation of carbohydrate metabolic process"/>
    <property type="evidence" value="ECO:0007669"/>
    <property type="project" value="InterPro"/>
</dbReference>
<dbReference type="FunFam" id="2.60.40.4380:FF:000002">
    <property type="entry name" value="Translational regulator CsrA"/>
    <property type="match status" value="1"/>
</dbReference>
<dbReference type="Gene3D" id="2.60.40.4380">
    <property type="entry name" value="Translational regulator CsrA"/>
    <property type="match status" value="1"/>
</dbReference>
<dbReference type="HAMAP" id="MF_00167">
    <property type="entry name" value="CsrA"/>
    <property type="match status" value="1"/>
</dbReference>
<dbReference type="InterPro" id="IPR003751">
    <property type="entry name" value="CsrA"/>
</dbReference>
<dbReference type="InterPro" id="IPR036107">
    <property type="entry name" value="CsrA_sf"/>
</dbReference>
<dbReference type="NCBIfam" id="TIGR00202">
    <property type="entry name" value="csrA"/>
    <property type="match status" value="1"/>
</dbReference>
<dbReference type="NCBIfam" id="NF002469">
    <property type="entry name" value="PRK01712.1"/>
    <property type="match status" value="1"/>
</dbReference>
<dbReference type="PANTHER" id="PTHR34984">
    <property type="entry name" value="CARBON STORAGE REGULATOR"/>
    <property type="match status" value="1"/>
</dbReference>
<dbReference type="PANTHER" id="PTHR34984:SF1">
    <property type="entry name" value="CARBON STORAGE REGULATOR"/>
    <property type="match status" value="1"/>
</dbReference>
<dbReference type="Pfam" id="PF02599">
    <property type="entry name" value="CsrA"/>
    <property type="match status" value="1"/>
</dbReference>
<dbReference type="SUPFAM" id="SSF117130">
    <property type="entry name" value="CsrA-like"/>
    <property type="match status" value="1"/>
</dbReference>
<evidence type="ECO:0000255" key="1">
    <source>
        <dbReference type="HAMAP-Rule" id="MF_00167"/>
    </source>
</evidence>
<organism>
    <name type="scientific">Bacillus velezensis (strain DSM 23117 / BGSC 10A6 / LMG 26770 / FZB42)</name>
    <name type="common">Bacillus amyloliquefaciens subsp. plantarum</name>
    <dbReference type="NCBI Taxonomy" id="326423"/>
    <lineage>
        <taxon>Bacteria</taxon>
        <taxon>Bacillati</taxon>
        <taxon>Bacillota</taxon>
        <taxon>Bacilli</taxon>
        <taxon>Bacillales</taxon>
        <taxon>Bacillaceae</taxon>
        <taxon>Bacillus</taxon>
        <taxon>Bacillus amyloliquefaciens group</taxon>
    </lineage>
</organism>
<keyword id="KW-1005">Bacterial flagellum biogenesis</keyword>
<keyword id="KW-0963">Cytoplasm</keyword>
<keyword id="KW-0678">Repressor</keyword>
<keyword id="KW-0694">RNA-binding</keyword>
<keyword id="KW-0810">Translation regulation</keyword>